<accession>B0BNY0</accession>
<dbReference type="EC" id="2.3.1.1" evidence="1"/>
<dbReference type="EMBL" id="CP000687">
    <property type="protein sequence ID" value="ABY69265.1"/>
    <property type="molecule type" value="Genomic_DNA"/>
</dbReference>
<dbReference type="RefSeq" id="WP_012262926.1">
    <property type="nucleotide sequence ID" value="NC_010278.1"/>
</dbReference>
<dbReference type="SMR" id="B0BNY0"/>
<dbReference type="KEGG" id="apj:APJL_0696"/>
<dbReference type="HOGENOM" id="CLU_024773_0_0_6"/>
<dbReference type="UniPathway" id="UPA00068">
    <property type="reaction ID" value="UER00106"/>
</dbReference>
<dbReference type="Proteomes" id="UP000008547">
    <property type="component" value="Chromosome"/>
</dbReference>
<dbReference type="GO" id="GO:0005737">
    <property type="term" value="C:cytoplasm"/>
    <property type="evidence" value="ECO:0007669"/>
    <property type="project" value="UniProtKB-SubCell"/>
</dbReference>
<dbReference type="GO" id="GO:0004042">
    <property type="term" value="F:L-glutamate N-acetyltransferase activity"/>
    <property type="evidence" value="ECO:0007669"/>
    <property type="project" value="UniProtKB-UniRule"/>
</dbReference>
<dbReference type="GO" id="GO:0006526">
    <property type="term" value="P:L-arginine biosynthetic process"/>
    <property type="evidence" value="ECO:0007669"/>
    <property type="project" value="UniProtKB-UniRule"/>
</dbReference>
<dbReference type="CDD" id="cd04237">
    <property type="entry name" value="AAK_NAGS-ABP"/>
    <property type="match status" value="1"/>
</dbReference>
<dbReference type="CDD" id="cd04301">
    <property type="entry name" value="NAT_SF"/>
    <property type="match status" value="1"/>
</dbReference>
<dbReference type="Gene3D" id="3.40.630.30">
    <property type="match status" value="1"/>
</dbReference>
<dbReference type="Gene3D" id="3.40.1160.10">
    <property type="entry name" value="Acetylglutamate kinase-like"/>
    <property type="match status" value="1"/>
</dbReference>
<dbReference type="HAMAP" id="MF_01105">
    <property type="entry name" value="N_acetyl_glu_synth"/>
    <property type="match status" value="1"/>
</dbReference>
<dbReference type="InterPro" id="IPR036393">
    <property type="entry name" value="AceGlu_kinase-like_sf"/>
</dbReference>
<dbReference type="InterPro" id="IPR016181">
    <property type="entry name" value="Acyl_CoA_acyltransferase"/>
</dbReference>
<dbReference type="InterPro" id="IPR001048">
    <property type="entry name" value="Asp/Glu/Uridylate_kinase"/>
</dbReference>
<dbReference type="InterPro" id="IPR000182">
    <property type="entry name" value="GNAT_dom"/>
</dbReference>
<dbReference type="InterPro" id="IPR033719">
    <property type="entry name" value="NAGS_kin"/>
</dbReference>
<dbReference type="InterPro" id="IPR010167">
    <property type="entry name" value="NH2A_AcTrfase"/>
</dbReference>
<dbReference type="NCBIfam" id="TIGR01890">
    <property type="entry name" value="N-Ac-Glu-synth"/>
    <property type="match status" value="1"/>
</dbReference>
<dbReference type="NCBIfam" id="NF003641">
    <property type="entry name" value="PRK05279.1"/>
    <property type="match status" value="1"/>
</dbReference>
<dbReference type="PANTHER" id="PTHR30602">
    <property type="entry name" value="AMINO-ACID ACETYLTRANSFERASE"/>
    <property type="match status" value="1"/>
</dbReference>
<dbReference type="PANTHER" id="PTHR30602:SF12">
    <property type="entry name" value="AMINO-ACID ACETYLTRANSFERASE NAGS1, CHLOROPLASTIC-RELATED"/>
    <property type="match status" value="1"/>
</dbReference>
<dbReference type="Pfam" id="PF00696">
    <property type="entry name" value="AA_kinase"/>
    <property type="match status" value="1"/>
</dbReference>
<dbReference type="Pfam" id="PF00583">
    <property type="entry name" value="Acetyltransf_1"/>
    <property type="match status" value="1"/>
</dbReference>
<dbReference type="PIRSF" id="PIRSF000423">
    <property type="entry name" value="ArgA"/>
    <property type="match status" value="1"/>
</dbReference>
<dbReference type="SUPFAM" id="SSF55729">
    <property type="entry name" value="Acyl-CoA N-acyltransferases (Nat)"/>
    <property type="match status" value="1"/>
</dbReference>
<dbReference type="SUPFAM" id="SSF53633">
    <property type="entry name" value="Carbamate kinase-like"/>
    <property type="match status" value="1"/>
</dbReference>
<dbReference type="PROSITE" id="PS51186">
    <property type="entry name" value="GNAT"/>
    <property type="match status" value="1"/>
</dbReference>
<protein>
    <recommendedName>
        <fullName evidence="1">Amino-acid acetyltransferase</fullName>
        <ecNumber evidence="1">2.3.1.1</ecNumber>
    </recommendedName>
    <alternativeName>
        <fullName evidence="1">N-acetylglutamate synthase</fullName>
        <shortName evidence="1">AGS</shortName>
        <shortName evidence="1">NAGS</shortName>
    </alternativeName>
</protein>
<evidence type="ECO:0000255" key="1">
    <source>
        <dbReference type="HAMAP-Rule" id="MF_01105"/>
    </source>
</evidence>
<feature type="chain" id="PRO_1000137049" description="Amino-acid acetyltransferase">
    <location>
        <begin position="1"/>
        <end position="437"/>
    </location>
</feature>
<feature type="domain" description="N-acetyltransferase" evidence="1">
    <location>
        <begin position="289"/>
        <end position="429"/>
    </location>
</feature>
<reference key="1">
    <citation type="journal article" date="2008" name="PLoS ONE">
        <title>Genome biology of Actinobacillus pleuropneumoniae JL03, an isolate of serotype 3 prevalent in China.</title>
        <authorList>
            <person name="Xu Z."/>
            <person name="Zhou Y."/>
            <person name="Li L."/>
            <person name="Zhou R."/>
            <person name="Xiao S."/>
            <person name="Wan Y."/>
            <person name="Zhang S."/>
            <person name="Wang K."/>
            <person name="Li W."/>
            <person name="Li L."/>
            <person name="Jin H."/>
            <person name="Kang M."/>
            <person name="Dalai B."/>
            <person name="Li T."/>
            <person name="Liu L."/>
            <person name="Cheng Y."/>
            <person name="Zhang L."/>
            <person name="Xu T."/>
            <person name="Zheng H."/>
            <person name="Pu S."/>
            <person name="Wang B."/>
            <person name="Gu W."/>
            <person name="Zhang X.L."/>
            <person name="Zhu G.-F."/>
            <person name="Wang S."/>
            <person name="Zhao G.-P."/>
            <person name="Chen H."/>
        </authorList>
    </citation>
    <scope>NUCLEOTIDE SEQUENCE [LARGE SCALE GENOMIC DNA]</scope>
    <source>
        <strain>JL03</strain>
    </source>
</reference>
<comment type="catalytic activity">
    <reaction evidence="1">
        <text>L-glutamate + acetyl-CoA = N-acetyl-L-glutamate + CoA + H(+)</text>
        <dbReference type="Rhea" id="RHEA:24292"/>
        <dbReference type="ChEBI" id="CHEBI:15378"/>
        <dbReference type="ChEBI" id="CHEBI:29985"/>
        <dbReference type="ChEBI" id="CHEBI:44337"/>
        <dbReference type="ChEBI" id="CHEBI:57287"/>
        <dbReference type="ChEBI" id="CHEBI:57288"/>
        <dbReference type="EC" id="2.3.1.1"/>
    </reaction>
</comment>
<comment type="pathway">
    <text evidence="1">Amino-acid biosynthesis; L-arginine biosynthesis; N(2)-acetyl-L-ornithine from L-glutamate: step 1/4.</text>
</comment>
<comment type="subcellular location">
    <subcellularLocation>
        <location evidence="1">Cytoplasm</location>
    </subcellularLocation>
</comment>
<comment type="miscellaneous">
    <text>In bacteria which possess the bifunctional enzyme ornithine acetyltransferase/N-acetylglutamate synthase (ArgJ), ArgA fulfills an anaplerotic role.</text>
</comment>
<comment type="similarity">
    <text evidence="1">Belongs to the acetyltransferase family. ArgA subfamily.</text>
</comment>
<gene>
    <name evidence="1" type="primary">argA</name>
    <name type="ordered locus">APJL_0696</name>
</gene>
<proteinExistence type="inferred from homology"/>
<name>ARGA_ACTPJ</name>
<keyword id="KW-0012">Acyltransferase</keyword>
<keyword id="KW-0028">Amino-acid biosynthesis</keyword>
<keyword id="KW-0055">Arginine biosynthesis</keyword>
<keyword id="KW-0963">Cytoplasm</keyword>
<keyword id="KW-0808">Transferase</keyword>
<sequence length="437" mass="49411">MRNTELVQWFRQSTPYVNMHREKTFVIMLDGNAIAHPNFINITNDISLLHSLGIKLVIVFGARCQIDELLAKNQMSSTYHKHIRITDSKTLEVVKQAVGGLHYDIFSRLSLRLPNSPVLNVVSSNAVLAQPLGVIDGVDYGLSGKIRRINIEGIQQQLAQDAIVVIGPIAPSVTGEMFNLPFEEIATQIAIKLKADKLIGFCDQQGILDSEGNVLSDLHPREAKRYLTQFIESGQYHHSAARFLQASIEVCHAGIKRSHLLSYKEDGSLLQELFSRDGIGTQLSEESSENIRLATSFDIPGLLNLIRPLEEQGILVKRSREQLEMEISNYTIIERDGIVIACAALNHYPEEKMAEMACVAVHPDYRDSSRGDVLLEAIKRRAYKLQVEKLFVLTTRTTQWFQERGFVLSTTDDLPKEKREHYNYQRMSKILILELSQ</sequence>
<organism>
    <name type="scientific">Actinobacillus pleuropneumoniae serotype 3 (strain JL03)</name>
    <dbReference type="NCBI Taxonomy" id="434271"/>
    <lineage>
        <taxon>Bacteria</taxon>
        <taxon>Pseudomonadati</taxon>
        <taxon>Pseudomonadota</taxon>
        <taxon>Gammaproteobacteria</taxon>
        <taxon>Pasteurellales</taxon>
        <taxon>Pasteurellaceae</taxon>
        <taxon>Actinobacillus</taxon>
    </lineage>
</organism>